<evidence type="ECO:0000255" key="1">
    <source>
        <dbReference type="HAMAP-Rule" id="MF_00147"/>
    </source>
</evidence>
<accession>A6Q538</accession>
<reference key="1">
    <citation type="journal article" date="2007" name="Proc. Natl. Acad. Sci. U.S.A.">
        <title>Deep-sea vent epsilon-proteobacterial genomes provide insights into emergence of pathogens.</title>
        <authorList>
            <person name="Nakagawa S."/>
            <person name="Takaki Y."/>
            <person name="Shimamura S."/>
            <person name="Reysenbach A.-L."/>
            <person name="Takai K."/>
            <person name="Horikoshi K."/>
        </authorList>
    </citation>
    <scope>NUCLEOTIDE SEQUENCE [LARGE SCALE GENOMIC DNA]</scope>
    <source>
        <strain>SB155-2</strain>
    </source>
</reference>
<proteinExistence type="inferred from homology"/>
<gene>
    <name evidence="1" type="primary">tpiA</name>
    <name type="ordered locus">NIS_1490</name>
</gene>
<sequence length="232" mass="25955">MILAANFKMNHTRASTKAYIERLNAYGKQTDIDIAVFPPATALDQYETFADIGAQNAYAAEHGSFTGEIGLQQLQEFGIETVLLGHSERRHIFYESQEMIARKFAFYKERGFTIYYCLGETLQTRKKGFEAIRELLQSQLEGIDTAYENFVIAYEPVWAIGTGVAAKPEEIEEVLAYLASLTDAPLLYGGSVKPANIKEVLSIPKCDGALIGTASWDVENFIKMIEIAKEMR</sequence>
<keyword id="KW-0963">Cytoplasm</keyword>
<keyword id="KW-0312">Gluconeogenesis</keyword>
<keyword id="KW-0324">Glycolysis</keyword>
<keyword id="KW-0413">Isomerase</keyword>
<keyword id="KW-1185">Reference proteome</keyword>
<organism>
    <name type="scientific">Nitratiruptor sp. (strain SB155-2)</name>
    <dbReference type="NCBI Taxonomy" id="387092"/>
    <lineage>
        <taxon>Bacteria</taxon>
        <taxon>Pseudomonadati</taxon>
        <taxon>Campylobacterota</taxon>
        <taxon>Epsilonproteobacteria</taxon>
        <taxon>Nautiliales</taxon>
        <taxon>Nitratiruptoraceae</taxon>
        <taxon>Nitratiruptor</taxon>
    </lineage>
</organism>
<protein>
    <recommendedName>
        <fullName evidence="1">Triosephosphate isomerase</fullName>
        <shortName evidence="1">TIM</shortName>
        <shortName evidence="1">TPI</shortName>
        <ecNumber evidence="1">5.3.1.1</ecNumber>
    </recommendedName>
    <alternativeName>
        <fullName evidence="1">Triose-phosphate isomerase</fullName>
    </alternativeName>
</protein>
<name>TPIS_NITSB</name>
<feature type="chain" id="PRO_1000009848" description="Triosephosphate isomerase">
    <location>
        <begin position="1"/>
        <end position="232"/>
    </location>
</feature>
<feature type="active site" description="Electrophile" evidence="1">
    <location>
        <position position="86"/>
    </location>
</feature>
<feature type="active site" description="Proton acceptor" evidence="1">
    <location>
        <position position="155"/>
    </location>
</feature>
<feature type="binding site" evidence="1">
    <location>
        <begin position="6"/>
        <end position="8"/>
    </location>
    <ligand>
        <name>substrate</name>
    </ligand>
</feature>
<feature type="binding site" evidence="1">
    <location>
        <position position="161"/>
    </location>
    <ligand>
        <name>substrate</name>
    </ligand>
</feature>
<feature type="binding site" evidence="1">
    <location>
        <position position="191"/>
    </location>
    <ligand>
        <name>substrate</name>
    </ligand>
</feature>
<dbReference type="EC" id="5.3.1.1" evidence="1"/>
<dbReference type="EMBL" id="AP009178">
    <property type="protein sequence ID" value="BAF70597.1"/>
    <property type="molecule type" value="Genomic_DNA"/>
</dbReference>
<dbReference type="RefSeq" id="WP_012082860.1">
    <property type="nucleotide sequence ID" value="NC_009662.1"/>
</dbReference>
<dbReference type="SMR" id="A6Q538"/>
<dbReference type="FunCoup" id="A6Q538">
    <property type="interactions" value="450"/>
</dbReference>
<dbReference type="STRING" id="387092.NIS_1490"/>
<dbReference type="KEGG" id="nis:NIS_1490"/>
<dbReference type="eggNOG" id="COG0149">
    <property type="taxonomic scope" value="Bacteria"/>
</dbReference>
<dbReference type="HOGENOM" id="CLU_024251_2_3_7"/>
<dbReference type="InParanoid" id="A6Q538"/>
<dbReference type="OrthoDB" id="9809429at2"/>
<dbReference type="UniPathway" id="UPA00109">
    <property type="reaction ID" value="UER00189"/>
</dbReference>
<dbReference type="UniPathway" id="UPA00138"/>
<dbReference type="Proteomes" id="UP000001118">
    <property type="component" value="Chromosome"/>
</dbReference>
<dbReference type="GO" id="GO:0005829">
    <property type="term" value="C:cytosol"/>
    <property type="evidence" value="ECO:0007669"/>
    <property type="project" value="TreeGrafter"/>
</dbReference>
<dbReference type="GO" id="GO:0004807">
    <property type="term" value="F:triose-phosphate isomerase activity"/>
    <property type="evidence" value="ECO:0007669"/>
    <property type="project" value="UniProtKB-UniRule"/>
</dbReference>
<dbReference type="GO" id="GO:0006094">
    <property type="term" value="P:gluconeogenesis"/>
    <property type="evidence" value="ECO:0007669"/>
    <property type="project" value="UniProtKB-UniRule"/>
</dbReference>
<dbReference type="GO" id="GO:0046166">
    <property type="term" value="P:glyceraldehyde-3-phosphate biosynthetic process"/>
    <property type="evidence" value="ECO:0007669"/>
    <property type="project" value="TreeGrafter"/>
</dbReference>
<dbReference type="GO" id="GO:0019563">
    <property type="term" value="P:glycerol catabolic process"/>
    <property type="evidence" value="ECO:0007669"/>
    <property type="project" value="TreeGrafter"/>
</dbReference>
<dbReference type="GO" id="GO:0006096">
    <property type="term" value="P:glycolytic process"/>
    <property type="evidence" value="ECO:0007669"/>
    <property type="project" value="UniProtKB-UniRule"/>
</dbReference>
<dbReference type="CDD" id="cd00311">
    <property type="entry name" value="TIM"/>
    <property type="match status" value="1"/>
</dbReference>
<dbReference type="Gene3D" id="3.20.20.70">
    <property type="entry name" value="Aldolase class I"/>
    <property type="match status" value="1"/>
</dbReference>
<dbReference type="HAMAP" id="MF_00147_B">
    <property type="entry name" value="TIM_B"/>
    <property type="match status" value="1"/>
</dbReference>
<dbReference type="InterPro" id="IPR013785">
    <property type="entry name" value="Aldolase_TIM"/>
</dbReference>
<dbReference type="InterPro" id="IPR035990">
    <property type="entry name" value="TIM_sf"/>
</dbReference>
<dbReference type="InterPro" id="IPR022896">
    <property type="entry name" value="TrioseP_Isoase_bac/euk"/>
</dbReference>
<dbReference type="InterPro" id="IPR000652">
    <property type="entry name" value="Triosephosphate_isomerase"/>
</dbReference>
<dbReference type="InterPro" id="IPR020861">
    <property type="entry name" value="Triosephosphate_isomerase_AS"/>
</dbReference>
<dbReference type="NCBIfam" id="NF000728">
    <property type="entry name" value="PRK00042.3-2"/>
    <property type="match status" value="1"/>
</dbReference>
<dbReference type="NCBIfam" id="TIGR00419">
    <property type="entry name" value="tim"/>
    <property type="match status" value="1"/>
</dbReference>
<dbReference type="PANTHER" id="PTHR21139">
    <property type="entry name" value="TRIOSEPHOSPHATE ISOMERASE"/>
    <property type="match status" value="1"/>
</dbReference>
<dbReference type="PANTHER" id="PTHR21139:SF42">
    <property type="entry name" value="TRIOSEPHOSPHATE ISOMERASE"/>
    <property type="match status" value="1"/>
</dbReference>
<dbReference type="Pfam" id="PF00121">
    <property type="entry name" value="TIM"/>
    <property type="match status" value="1"/>
</dbReference>
<dbReference type="SUPFAM" id="SSF51351">
    <property type="entry name" value="Triosephosphate isomerase (TIM)"/>
    <property type="match status" value="1"/>
</dbReference>
<dbReference type="PROSITE" id="PS00171">
    <property type="entry name" value="TIM_1"/>
    <property type="match status" value="1"/>
</dbReference>
<dbReference type="PROSITE" id="PS51440">
    <property type="entry name" value="TIM_2"/>
    <property type="match status" value="1"/>
</dbReference>
<comment type="function">
    <text evidence="1">Involved in the gluconeogenesis. Catalyzes stereospecifically the conversion of dihydroxyacetone phosphate (DHAP) to D-glyceraldehyde-3-phosphate (G3P).</text>
</comment>
<comment type="catalytic activity">
    <reaction evidence="1">
        <text>D-glyceraldehyde 3-phosphate = dihydroxyacetone phosphate</text>
        <dbReference type="Rhea" id="RHEA:18585"/>
        <dbReference type="ChEBI" id="CHEBI:57642"/>
        <dbReference type="ChEBI" id="CHEBI:59776"/>
        <dbReference type="EC" id="5.3.1.1"/>
    </reaction>
</comment>
<comment type="pathway">
    <text evidence="1">Carbohydrate biosynthesis; gluconeogenesis.</text>
</comment>
<comment type="pathway">
    <text evidence="1">Carbohydrate degradation; glycolysis; D-glyceraldehyde 3-phosphate from glycerone phosphate: step 1/1.</text>
</comment>
<comment type="subunit">
    <text evidence="1">Homodimer.</text>
</comment>
<comment type="subcellular location">
    <subcellularLocation>
        <location evidence="1">Cytoplasm</location>
    </subcellularLocation>
</comment>
<comment type="similarity">
    <text evidence="1">Belongs to the triosephosphate isomerase family.</text>
</comment>